<comment type="function">
    <text evidence="1">Catalyzes a salvage reaction resulting in the formation of AMP, that is energically less costly than de novo synthesis.</text>
</comment>
<comment type="catalytic activity">
    <reaction evidence="1">
        <text>AMP + diphosphate = 5-phospho-alpha-D-ribose 1-diphosphate + adenine</text>
        <dbReference type="Rhea" id="RHEA:16609"/>
        <dbReference type="ChEBI" id="CHEBI:16708"/>
        <dbReference type="ChEBI" id="CHEBI:33019"/>
        <dbReference type="ChEBI" id="CHEBI:58017"/>
        <dbReference type="ChEBI" id="CHEBI:456215"/>
        <dbReference type="EC" id="2.4.2.7"/>
    </reaction>
</comment>
<comment type="pathway">
    <text evidence="1">Purine metabolism; AMP biosynthesis via salvage pathway; AMP from adenine: step 1/1.</text>
</comment>
<comment type="subunit">
    <text evidence="1">Homodimer.</text>
</comment>
<comment type="subcellular location">
    <subcellularLocation>
        <location evidence="1">Cytoplasm</location>
    </subcellularLocation>
</comment>
<comment type="similarity">
    <text evidence="1">Belongs to the purine/pyrimidine phosphoribosyltransferase family.</text>
</comment>
<evidence type="ECO:0000255" key="1">
    <source>
        <dbReference type="HAMAP-Rule" id="MF_00004"/>
    </source>
</evidence>
<sequence>MTCAQVIRQFYQATIMTATAQQLQFIKDSIKTIPDYPKPGILFRDVTSLLENPLAYAASIELLVERFREAGVTKVVGTEARGFLFGAPVALALGVGFVPVRKPGKLPRATLSESYELEYGTDKLEIHTDAISAGDKVLVVDDLLATGGTIEATAKLIRRLGGEVTDAAFIINLPDLGGEARLNTLGIECYSLVNFSGH</sequence>
<organism>
    <name type="scientific">Serratia proteamaculans (strain 568)</name>
    <dbReference type="NCBI Taxonomy" id="399741"/>
    <lineage>
        <taxon>Bacteria</taxon>
        <taxon>Pseudomonadati</taxon>
        <taxon>Pseudomonadota</taxon>
        <taxon>Gammaproteobacteria</taxon>
        <taxon>Enterobacterales</taxon>
        <taxon>Yersiniaceae</taxon>
        <taxon>Serratia</taxon>
    </lineage>
</organism>
<feature type="chain" id="PRO_0000321400" description="Adenine phosphoribosyltransferase">
    <location>
        <begin position="1"/>
        <end position="198"/>
    </location>
</feature>
<keyword id="KW-0963">Cytoplasm</keyword>
<keyword id="KW-0328">Glycosyltransferase</keyword>
<keyword id="KW-0660">Purine salvage</keyword>
<keyword id="KW-0808">Transferase</keyword>
<protein>
    <recommendedName>
        <fullName evidence="1">Adenine phosphoribosyltransferase</fullName>
        <shortName evidence="1">APRT</shortName>
        <ecNumber evidence="1">2.4.2.7</ecNumber>
    </recommendedName>
</protein>
<reference key="1">
    <citation type="submission" date="2007-09" db="EMBL/GenBank/DDBJ databases">
        <title>Complete sequence of chromosome of Serratia proteamaculans 568.</title>
        <authorList>
            <consortium name="US DOE Joint Genome Institute"/>
            <person name="Copeland A."/>
            <person name="Lucas S."/>
            <person name="Lapidus A."/>
            <person name="Barry K."/>
            <person name="Glavina del Rio T."/>
            <person name="Dalin E."/>
            <person name="Tice H."/>
            <person name="Pitluck S."/>
            <person name="Chain P."/>
            <person name="Malfatti S."/>
            <person name="Shin M."/>
            <person name="Vergez L."/>
            <person name="Schmutz J."/>
            <person name="Larimer F."/>
            <person name="Land M."/>
            <person name="Hauser L."/>
            <person name="Kyrpides N."/>
            <person name="Kim E."/>
            <person name="Taghavi S."/>
            <person name="Newman L."/>
            <person name="Vangronsveld J."/>
            <person name="van der Lelie D."/>
            <person name="Richardson P."/>
        </authorList>
    </citation>
    <scope>NUCLEOTIDE SEQUENCE [LARGE SCALE GENOMIC DNA]</scope>
    <source>
        <strain>568</strain>
    </source>
</reference>
<dbReference type="EC" id="2.4.2.7" evidence="1"/>
<dbReference type="EMBL" id="CP000826">
    <property type="protein sequence ID" value="ABV40238.1"/>
    <property type="molecule type" value="Genomic_DNA"/>
</dbReference>
<dbReference type="SMR" id="A8GAU8"/>
<dbReference type="STRING" id="399741.Spro_1134"/>
<dbReference type="KEGG" id="spe:Spro_1134"/>
<dbReference type="eggNOG" id="COG0503">
    <property type="taxonomic scope" value="Bacteria"/>
</dbReference>
<dbReference type="HOGENOM" id="CLU_063339_3_0_6"/>
<dbReference type="UniPathway" id="UPA00588">
    <property type="reaction ID" value="UER00646"/>
</dbReference>
<dbReference type="GO" id="GO:0005829">
    <property type="term" value="C:cytosol"/>
    <property type="evidence" value="ECO:0007669"/>
    <property type="project" value="TreeGrafter"/>
</dbReference>
<dbReference type="GO" id="GO:0003999">
    <property type="term" value="F:adenine phosphoribosyltransferase activity"/>
    <property type="evidence" value="ECO:0007669"/>
    <property type="project" value="UniProtKB-UniRule"/>
</dbReference>
<dbReference type="GO" id="GO:0006168">
    <property type="term" value="P:adenine salvage"/>
    <property type="evidence" value="ECO:0007669"/>
    <property type="project" value="InterPro"/>
</dbReference>
<dbReference type="GO" id="GO:0044209">
    <property type="term" value="P:AMP salvage"/>
    <property type="evidence" value="ECO:0007669"/>
    <property type="project" value="UniProtKB-UniRule"/>
</dbReference>
<dbReference type="GO" id="GO:0006166">
    <property type="term" value="P:purine ribonucleoside salvage"/>
    <property type="evidence" value="ECO:0007669"/>
    <property type="project" value="UniProtKB-KW"/>
</dbReference>
<dbReference type="CDD" id="cd06223">
    <property type="entry name" value="PRTases_typeI"/>
    <property type="match status" value="1"/>
</dbReference>
<dbReference type="FunFam" id="3.40.50.2020:FF:000004">
    <property type="entry name" value="Adenine phosphoribosyltransferase"/>
    <property type="match status" value="1"/>
</dbReference>
<dbReference type="Gene3D" id="3.40.50.2020">
    <property type="match status" value="1"/>
</dbReference>
<dbReference type="HAMAP" id="MF_00004">
    <property type="entry name" value="Aden_phosphoribosyltr"/>
    <property type="match status" value="1"/>
</dbReference>
<dbReference type="InterPro" id="IPR005764">
    <property type="entry name" value="Ade_phspho_trans"/>
</dbReference>
<dbReference type="InterPro" id="IPR050120">
    <property type="entry name" value="Adenine_PRTase"/>
</dbReference>
<dbReference type="InterPro" id="IPR000836">
    <property type="entry name" value="PRibTrfase_dom"/>
</dbReference>
<dbReference type="InterPro" id="IPR029057">
    <property type="entry name" value="PRTase-like"/>
</dbReference>
<dbReference type="NCBIfam" id="TIGR01090">
    <property type="entry name" value="apt"/>
    <property type="match status" value="1"/>
</dbReference>
<dbReference type="NCBIfam" id="NF002632">
    <property type="entry name" value="PRK02304.1-1"/>
    <property type="match status" value="1"/>
</dbReference>
<dbReference type="NCBIfam" id="NF002634">
    <property type="entry name" value="PRK02304.1-3"/>
    <property type="match status" value="1"/>
</dbReference>
<dbReference type="NCBIfam" id="NF002636">
    <property type="entry name" value="PRK02304.1-5"/>
    <property type="match status" value="1"/>
</dbReference>
<dbReference type="PANTHER" id="PTHR11776">
    <property type="entry name" value="ADENINE PHOSPHORIBOSYLTRANSFERASE"/>
    <property type="match status" value="1"/>
</dbReference>
<dbReference type="PANTHER" id="PTHR11776:SF7">
    <property type="entry name" value="PHOSPHORIBOSYLTRANSFERASE DOMAIN-CONTAINING PROTEIN"/>
    <property type="match status" value="1"/>
</dbReference>
<dbReference type="Pfam" id="PF00156">
    <property type="entry name" value="Pribosyltran"/>
    <property type="match status" value="1"/>
</dbReference>
<dbReference type="SUPFAM" id="SSF53271">
    <property type="entry name" value="PRTase-like"/>
    <property type="match status" value="1"/>
</dbReference>
<dbReference type="PROSITE" id="PS00103">
    <property type="entry name" value="PUR_PYR_PR_TRANSFER"/>
    <property type="match status" value="1"/>
</dbReference>
<gene>
    <name evidence="1" type="primary">apt</name>
    <name type="ordered locus">Spro_1134</name>
</gene>
<accession>A8GAU8</accession>
<name>APT_SERP5</name>
<proteinExistence type="inferred from homology"/>